<organism>
    <name type="scientific">Mycobacterium sp. (strain JLS)</name>
    <dbReference type="NCBI Taxonomy" id="164757"/>
    <lineage>
        <taxon>Bacteria</taxon>
        <taxon>Bacillati</taxon>
        <taxon>Actinomycetota</taxon>
        <taxon>Actinomycetes</taxon>
        <taxon>Mycobacteriales</taxon>
        <taxon>Mycobacteriaceae</taxon>
        <taxon>Mycobacterium</taxon>
    </lineage>
</organism>
<proteinExistence type="inferred from homology"/>
<accession>A3Q4N0</accession>
<feature type="chain" id="PRO_1000021137" description="4-hydroxy-3-methylbut-2-enyl diphosphate reductase">
    <location>
        <begin position="1"/>
        <end position="333"/>
    </location>
</feature>
<feature type="active site" description="Proton donor" evidence="1">
    <location>
        <position position="148"/>
    </location>
</feature>
<feature type="binding site" evidence="1">
    <location>
        <position position="34"/>
    </location>
    <ligand>
        <name>[4Fe-4S] cluster</name>
        <dbReference type="ChEBI" id="CHEBI:49883"/>
    </ligand>
</feature>
<feature type="binding site" evidence="1">
    <location>
        <position position="63"/>
    </location>
    <ligand>
        <name>(2E)-4-hydroxy-3-methylbut-2-enyl diphosphate</name>
        <dbReference type="ChEBI" id="CHEBI:128753"/>
    </ligand>
</feature>
<feature type="binding site" evidence="1">
    <location>
        <position position="63"/>
    </location>
    <ligand>
        <name>dimethylallyl diphosphate</name>
        <dbReference type="ChEBI" id="CHEBI:57623"/>
    </ligand>
</feature>
<feature type="binding site" evidence="1">
    <location>
        <position position="63"/>
    </location>
    <ligand>
        <name>isopentenyl diphosphate</name>
        <dbReference type="ChEBI" id="CHEBI:128769"/>
    </ligand>
</feature>
<feature type="binding site" evidence="1">
    <location>
        <position position="96"/>
    </location>
    <ligand>
        <name>(2E)-4-hydroxy-3-methylbut-2-enyl diphosphate</name>
        <dbReference type="ChEBI" id="CHEBI:128753"/>
    </ligand>
</feature>
<feature type="binding site" evidence="1">
    <location>
        <position position="96"/>
    </location>
    <ligand>
        <name>dimethylallyl diphosphate</name>
        <dbReference type="ChEBI" id="CHEBI:57623"/>
    </ligand>
</feature>
<feature type="binding site" evidence="1">
    <location>
        <position position="96"/>
    </location>
    <ligand>
        <name>isopentenyl diphosphate</name>
        <dbReference type="ChEBI" id="CHEBI:128769"/>
    </ligand>
</feature>
<feature type="binding site" evidence="1">
    <location>
        <position position="118"/>
    </location>
    <ligand>
        <name>[4Fe-4S] cluster</name>
        <dbReference type="ChEBI" id="CHEBI:49883"/>
    </ligand>
</feature>
<feature type="binding site" evidence="1">
    <location>
        <position position="146"/>
    </location>
    <ligand>
        <name>(2E)-4-hydroxy-3-methylbut-2-enyl diphosphate</name>
        <dbReference type="ChEBI" id="CHEBI:128753"/>
    </ligand>
</feature>
<feature type="binding site" evidence="1">
    <location>
        <position position="146"/>
    </location>
    <ligand>
        <name>dimethylallyl diphosphate</name>
        <dbReference type="ChEBI" id="CHEBI:57623"/>
    </ligand>
</feature>
<feature type="binding site" evidence="1">
    <location>
        <position position="146"/>
    </location>
    <ligand>
        <name>isopentenyl diphosphate</name>
        <dbReference type="ChEBI" id="CHEBI:128769"/>
    </ligand>
</feature>
<feature type="binding site" evidence="1">
    <location>
        <position position="186"/>
    </location>
    <ligand>
        <name>(2E)-4-hydroxy-3-methylbut-2-enyl diphosphate</name>
        <dbReference type="ChEBI" id="CHEBI:128753"/>
    </ligand>
</feature>
<feature type="binding site" evidence="1">
    <location>
        <position position="216"/>
    </location>
    <ligand>
        <name>[4Fe-4S] cluster</name>
        <dbReference type="ChEBI" id="CHEBI:49883"/>
    </ligand>
</feature>
<feature type="binding site" evidence="1">
    <location>
        <position position="244"/>
    </location>
    <ligand>
        <name>(2E)-4-hydroxy-3-methylbut-2-enyl diphosphate</name>
        <dbReference type="ChEBI" id="CHEBI:128753"/>
    </ligand>
</feature>
<feature type="binding site" evidence="1">
    <location>
        <position position="244"/>
    </location>
    <ligand>
        <name>dimethylallyl diphosphate</name>
        <dbReference type="ChEBI" id="CHEBI:57623"/>
    </ligand>
</feature>
<feature type="binding site" evidence="1">
    <location>
        <position position="244"/>
    </location>
    <ligand>
        <name>isopentenyl diphosphate</name>
        <dbReference type="ChEBI" id="CHEBI:128769"/>
    </ligand>
</feature>
<feature type="binding site" evidence="1">
    <location>
        <position position="245"/>
    </location>
    <ligand>
        <name>(2E)-4-hydroxy-3-methylbut-2-enyl diphosphate</name>
        <dbReference type="ChEBI" id="CHEBI:128753"/>
    </ligand>
</feature>
<feature type="binding site" evidence="1">
    <location>
        <position position="245"/>
    </location>
    <ligand>
        <name>dimethylallyl diphosphate</name>
        <dbReference type="ChEBI" id="CHEBI:57623"/>
    </ligand>
</feature>
<feature type="binding site" evidence="1">
    <location>
        <position position="245"/>
    </location>
    <ligand>
        <name>isopentenyl diphosphate</name>
        <dbReference type="ChEBI" id="CHEBI:128769"/>
    </ligand>
</feature>
<feature type="binding site" evidence="1">
    <location>
        <position position="246"/>
    </location>
    <ligand>
        <name>(2E)-4-hydroxy-3-methylbut-2-enyl diphosphate</name>
        <dbReference type="ChEBI" id="CHEBI:128753"/>
    </ligand>
</feature>
<feature type="binding site" evidence="1">
    <location>
        <position position="246"/>
    </location>
    <ligand>
        <name>dimethylallyl diphosphate</name>
        <dbReference type="ChEBI" id="CHEBI:57623"/>
    </ligand>
</feature>
<feature type="binding site" evidence="1">
    <location>
        <position position="246"/>
    </location>
    <ligand>
        <name>isopentenyl diphosphate</name>
        <dbReference type="ChEBI" id="CHEBI:128769"/>
    </ligand>
</feature>
<feature type="binding site" evidence="1">
    <location>
        <position position="289"/>
    </location>
    <ligand>
        <name>(2E)-4-hydroxy-3-methylbut-2-enyl diphosphate</name>
        <dbReference type="ChEBI" id="CHEBI:128753"/>
    </ligand>
</feature>
<feature type="binding site" evidence="1">
    <location>
        <position position="289"/>
    </location>
    <ligand>
        <name>dimethylallyl diphosphate</name>
        <dbReference type="ChEBI" id="CHEBI:57623"/>
    </ligand>
</feature>
<feature type="binding site" evidence="1">
    <location>
        <position position="289"/>
    </location>
    <ligand>
        <name>isopentenyl diphosphate</name>
        <dbReference type="ChEBI" id="CHEBI:128769"/>
    </ligand>
</feature>
<gene>
    <name evidence="1" type="primary">ispH</name>
    <name type="ordered locus">Mjls_4336</name>
</gene>
<keyword id="KW-0004">4Fe-4S</keyword>
<keyword id="KW-0408">Iron</keyword>
<keyword id="KW-0411">Iron-sulfur</keyword>
<keyword id="KW-0414">Isoprene biosynthesis</keyword>
<keyword id="KW-0479">Metal-binding</keyword>
<keyword id="KW-0560">Oxidoreductase</keyword>
<name>ISPH_MYCSJ</name>
<evidence type="ECO:0000255" key="1">
    <source>
        <dbReference type="HAMAP-Rule" id="MF_00191"/>
    </source>
</evidence>
<sequence length="333" mass="35682">MPPTINMGIPGASSSVTGGVSGKRVLLAEPRGYCAGVDRAVETVERALEKHGAPVYVRHEIVHNRYVVDTLAKAGAVFVEQTDEVPEGAIVVFSAHGVAPTVHVEAAARNLKTIDATCPLVTKVHNEAKRFARDDYDILLVGHEGHEEVVGTAGEAPDHVQVVDNPDAVDKVTVRDPDKVIWLSQTTLSVDETMETVRRLREKFPTLQDPPSDDICYATQNRQVAVKAMAPECELVIVVGSKNSSNSVRLVEVALGAGSDAAHLVDYAEDIDPTWLDGVTTVGVTSGASVPEVLVRGVLDRLAEYGYGTVQPVTTANETLVFALPREIRPARS</sequence>
<reference key="1">
    <citation type="submission" date="2007-02" db="EMBL/GenBank/DDBJ databases">
        <title>Complete sequence of Mycobacterium sp. JLS.</title>
        <authorList>
            <consortium name="US DOE Joint Genome Institute"/>
            <person name="Copeland A."/>
            <person name="Lucas S."/>
            <person name="Lapidus A."/>
            <person name="Barry K."/>
            <person name="Detter J.C."/>
            <person name="Glavina del Rio T."/>
            <person name="Hammon N."/>
            <person name="Israni S."/>
            <person name="Dalin E."/>
            <person name="Tice H."/>
            <person name="Pitluck S."/>
            <person name="Chain P."/>
            <person name="Malfatti S."/>
            <person name="Shin M."/>
            <person name="Vergez L."/>
            <person name="Schmutz J."/>
            <person name="Larimer F."/>
            <person name="Land M."/>
            <person name="Hauser L."/>
            <person name="Kyrpides N."/>
            <person name="Mikhailova N."/>
            <person name="Miller C.D."/>
            <person name="Anderson A.J."/>
            <person name="Sims R.C."/>
            <person name="Richardson P."/>
        </authorList>
    </citation>
    <scope>NUCLEOTIDE SEQUENCE [LARGE SCALE GENOMIC DNA]</scope>
    <source>
        <strain>JLS</strain>
    </source>
</reference>
<protein>
    <recommendedName>
        <fullName evidence="1">4-hydroxy-3-methylbut-2-enyl diphosphate reductase</fullName>
        <shortName evidence="1">HMBPP reductase</shortName>
        <ecNumber evidence="1">1.17.7.4</ecNumber>
    </recommendedName>
</protein>
<dbReference type="EC" id="1.17.7.4" evidence="1"/>
<dbReference type="EMBL" id="CP000580">
    <property type="protein sequence ID" value="ABO00108.1"/>
    <property type="molecule type" value="Genomic_DNA"/>
</dbReference>
<dbReference type="SMR" id="A3Q4N0"/>
<dbReference type="KEGG" id="mjl:Mjls_4336"/>
<dbReference type="HOGENOM" id="CLU_027486_1_0_11"/>
<dbReference type="BioCyc" id="MSP164757:G1G8C-4377-MONOMER"/>
<dbReference type="UniPathway" id="UPA00056">
    <property type="reaction ID" value="UER00097"/>
</dbReference>
<dbReference type="UniPathway" id="UPA00059">
    <property type="reaction ID" value="UER00105"/>
</dbReference>
<dbReference type="GO" id="GO:0051539">
    <property type="term" value="F:4 iron, 4 sulfur cluster binding"/>
    <property type="evidence" value="ECO:0007669"/>
    <property type="project" value="UniProtKB-UniRule"/>
</dbReference>
<dbReference type="GO" id="GO:0051745">
    <property type="term" value="F:4-hydroxy-3-methylbut-2-enyl diphosphate reductase activity"/>
    <property type="evidence" value="ECO:0007669"/>
    <property type="project" value="UniProtKB-UniRule"/>
</dbReference>
<dbReference type="GO" id="GO:0046872">
    <property type="term" value="F:metal ion binding"/>
    <property type="evidence" value="ECO:0007669"/>
    <property type="project" value="UniProtKB-KW"/>
</dbReference>
<dbReference type="GO" id="GO:0050992">
    <property type="term" value="P:dimethylallyl diphosphate biosynthetic process"/>
    <property type="evidence" value="ECO:0007669"/>
    <property type="project" value="UniProtKB-UniRule"/>
</dbReference>
<dbReference type="GO" id="GO:0019288">
    <property type="term" value="P:isopentenyl diphosphate biosynthetic process, methylerythritol 4-phosphate pathway"/>
    <property type="evidence" value="ECO:0007669"/>
    <property type="project" value="UniProtKB-UniRule"/>
</dbReference>
<dbReference type="GO" id="GO:0016114">
    <property type="term" value="P:terpenoid biosynthetic process"/>
    <property type="evidence" value="ECO:0007669"/>
    <property type="project" value="UniProtKB-UniRule"/>
</dbReference>
<dbReference type="CDD" id="cd13944">
    <property type="entry name" value="lytB_ispH"/>
    <property type="match status" value="1"/>
</dbReference>
<dbReference type="Gene3D" id="3.40.50.11270">
    <property type="match status" value="1"/>
</dbReference>
<dbReference type="Gene3D" id="3.40.1010.20">
    <property type="entry name" value="4-hydroxy-3-methylbut-2-enyl diphosphate reductase, catalytic domain"/>
    <property type="match status" value="2"/>
</dbReference>
<dbReference type="HAMAP" id="MF_00191">
    <property type="entry name" value="IspH"/>
    <property type="match status" value="1"/>
</dbReference>
<dbReference type="InterPro" id="IPR003451">
    <property type="entry name" value="LytB/IspH"/>
</dbReference>
<dbReference type="NCBIfam" id="TIGR00216">
    <property type="entry name" value="ispH_lytB"/>
    <property type="match status" value="1"/>
</dbReference>
<dbReference type="NCBIfam" id="NF002188">
    <property type="entry name" value="PRK01045.1-2"/>
    <property type="match status" value="1"/>
</dbReference>
<dbReference type="NCBIfam" id="NF002189">
    <property type="entry name" value="PRK01045.1-3"/>
    <property type="match status" value="1"/>
</dbReference>
<dbReference type="NCBIfam" id="NF002190">
    <property type="entry name" value="PRK01045.1-4"/>
    <property type="match status" value="1"/>
</dbReference>
<dbReference type="PANTHER" id="PTHR30426">
    <property type="entry name" value="4-HYDROXY-3-METHYLBUT-2-ENYL DIPHOSPHATE REDUCTASE"/>
    <property type="match status" value="1"/>
</dbReference>
<dbReference type="PANTHER" id="PTHR30426:SF0">
    <property type="entry name" value="4-HYDROXY-3-METHYLBUT-2-ENYL DIPHOSPHATE REDUCTASE"/>
    <property type="match status" value="1"/>
</dbReference>
<dbReference type="Pfam" id="PF02401">
    <property type="entry name" value="LYTB"/>
    <property type="match status" value="1"/>
</dbReference>
<comment type="function">
    <text evidence="1">Catalyzes the conversion of 1-hydroxy-2-methyl-2-(E)-butenyl 4-diphosphate (HMBPP) into a mixture of isopentenyl diphosphate (IPP) and dimethylallyl diphosphate (DMAPP). Acts in the terminal step of the DOXP/MEP pathway for isoprenoid precursor biosynthesis.</text>
</comment>
<comment type="catalytic activity">
    <reaction evidence="1">
        <text>isopentenyl diphosphate + 2 oxidized [2Fe-2S]-[ferredoxin] + H2O = (2E)-4-hydroxy-3-methylbut-2-enyl diphosphate + 2 reduced [2Fe-2S]-[ferredoxin] + 2 H(+)</text>
        <dbReference type="Rhea" id="RHEA:24488"/>
        <dbReference type="Rhea" id="RHEA-COMP:10000"/>
        <dbReference type="Rhea" id="RHEA-COMP:10001"/>
        <dbReference type="ChEBI" id="CHEBI:15377"/>
        <dbReference type="ChEBI" id="CHEBI:15378"/>
        <dbReference type="ChEBI" id="CHEBI:33737"/>
        <dbReference type="ChEBI" id="CHEBI:33738"/>
        <dbReference type="ChEBI" id="CHEBI:128753"/>
        <dbReference type="ChEBI" id="CHEBI:128769"/>
        <dbReference type="EC" id="1.17.7.4"/>
    </reaction>
</comment>
<comment type="catalytic activity">
    <reaction evidence="1">
        <text>dimethylallyl diphosphate + 2 oxidized [2Fe-2S]-[ferredoxin] + H2O = (2E)-4-hydroxy-3-methylbut-2-enyl diphosphate + 2 reduced [2Fe-2S]-[ferredoxin] + 2 H(+)</text>
        <dbReference type="Rhea" id="RHEA:24825"/>
        <dbReference type="Rhea" id="RHEA-COMP:10000"/>
        <dbReference type="Rhea" id="RHEA-COMP:10001"/>
        <dbReference type="ChEBI" id="CHEBI:15377"/>
        <dbReference type="ChEBI" id="CHEBI:15378"/>
        <dbReference type="ChEBI" id="CHEBI:33737"/>
        <dbReference type="ChEBI" id="CHEBI:33738"/>
        <dbReference type="ChEBI" id="CHEBI:57623"/>
        <dbReference type="ChEBI" id="CHEBI:128753"/>
        <dbReference type="EC" id="1.17.7.4"/>
    </reaction>
</comment>
<comment type="cofactor">
    <cofactor evidence="1">
        <name>[4Fe-4S] cluster</name>
        <dbReference type="ChEBI" id="CHEBI:49883"/>
    </cofactor>
    <text evidence="1">Binds 1 [4Fe-4S] cluster per subunit.</text>
</comment>
<comment type="pathway">
    <text evidence="1">Isoprenoid biosynthesis; dimethylallyl diphosphate biosynthesis; dimethylallyl diphosphate from (2E)-4-hydroxy-3-methylbutenyl diphosphate: step 1/1.</text>
</comment>
<comment type="pathway">
    <text evidence="1">Isoprenoid biosynthesis; isopentenyl diphosphate biosynthesis via DXP pathway; isopentenyl diphosphate from 1-deoxy-D-xylulose 5-phosphate: step 6/6.</text>
</comment>
<comment type="similarity">
    <text evidence="1">Belongs to the IspH family.</text>
</comment>